<keyword id="KW-0175">Coiled coil</keyword>
<keyword id="KW-0325">Glycoprotein</keyword>
<keyword id="KW-1043">Host membrane</keyword>
<keyword id="KW-0426">Late protein</keyword>
<keyword id="KW-0472">Membrane</keyword>
<keyword id="KW-0812">Transmembrane</keyword>
<keyword id="KW-1133">Transmembrane helix</keyword>
<protein>
    <recommendedName>
        <fullName>Uncharacterized protein B475L</fullName>
        <shortName>pB475L</shortName>
    </recommendedName>
</protein>
<gene>
    <name type="ordered locus">Ken-089</name>
</gene>
<organism>
    <name type="scientific">African swine fever virus (isolate Pig/Kenya/KEN-50/1950)</name>
    <name type="common">ASFV</name>
    <dbReference type="NCBI Taxonomy" id="561445"/>
    <lineage>
        <taxon>Viruses</taxon>
        <taxon>Varidnaviria</taxon>
        <taxon>Bamfordvirae</taxon>
        <taxon>Nucleocytoviricota</taxon>
        <taxon>Pokkesviricetes</taxon>
        <taxon>Asfuvirales</taxon>
        <taxon>Asfarviridae</taxon>
        <taxon>Asfivirus</taxon>
        <taxon>African swine fever virus</taxon>
    </lineage>
</organism>
<feature type="chain" id="PRO_0000373696" description="Uncharacterized protein B475L">
    <location>
        <begin position="1"/>
        <end position="480"/>
    </location>
</feature>
<feature type="transmembrane region" description="Helical" evidence="1">
    <location>
        <begin position="7"/>
        <end position="28"/>
    </location>
</feature>
<feature type="region of interest" description="Disordered" evidence="2">
    <location>
        <begin position="297"/>
        <end position="332"/>
    </location>
</feature>
<feature type="coiled-coil region" evidence="1">
    <location>
        <begin position="195"/>
        <end position="235"/>
    </location>
</feature>
<feature type="compositionally biased region" description="Polar residues" evidence="2">
    <location>
        <begin position="301"/>
        <end position="329"/>
    </location>
</feature>
<feature type="glycosylation site" description="N-linked (GlcNAc...) asparagine; by host" evidence="1">
    <location>
        <position position="73"/>
    </location>
</feature>
<feature type="glycosylation site" description="N-linked (GlcNAc...) asparagine; by host" evidence="1">
    <location>
        <position position="195"/>
    </location>
</feature>
<feature type="glycosylation site" description="N-linked (GlcNAc...) asparagine; by host" evidence="1">
    <location>
        <position position="455"/>
    </location>
</feature>
<reference key="1">
    <citation type="submission" date="2003-03" db="EMBL/GenBank/DDBJ databases">
        <title>African swine fever virus genomes.</title>
        <authorList>
            <person name="Kutish G.F."/>
            <person name="Rock D.L."/>
        </authorList>
    </citation>
    <scope>NUCLEOTIDE SEQUENCE [LARGE SCALE GENOMIC DNA]</scope>
</reference>
<organismHost>
    <name type="scientific">Ornithodoros</name>
    <name type="common">relapsing fever ticks</name>
    <dbReference type="NCBI Taxonomy" id="6937"/>
</organismHost>
<organismHost>
    <name type="scientific">Phacochoerus aethiopicus</name>
    <name type="common">Warthog</name>
    <dbReference type="NCBI Taxonomy" id="85517"/>
</organismHost>
<organismHost>
    <name type="scientific">Phacochoerus africanus</name>
    <name type="common">Warthog</name>
    <dbReference type="NCBI Taxonomy" id="41426"/>
</organismHost>
<organismHost>
    <name type="scientific">Potamochoerus larvatus</name>
    <name type="common">Bushpig</name>
    <dbReference type="NCBI Taxonomy" id="273792"/>
</organismHost>
<organismHost>
    <name type="scientific">Sus scrofa</name>
    <name type="common">Pig</name>
    <dbReference type="NCBI Taxonomy" id="9823"/>
</organismHost>
<accession>P0CAH7</accession>
<evidence type="ECO:0000255" key="1"/>
<evidence type="ECO:0000256" key="2">
    <source>
        <dbReference type="SAM" id="MobiDB-lite"/>
    </source>
</evidence>
<evidence type="ECO:0000305" key="3"/>
<proteinExistence type="inferred from homology"/>
<name>VF475_ASFK5</name>
<dbReference type="EMBL" id="AY261360">
    <property type="status" value="NOT_ANNOTATED_CDS"/>
    <property type="molecule type" value="Genomic_DNA"/>
</dbReference>
<dbReference type="SMR" id="P0CAH7"/>
<dbReference type="Proteomes" id="UP000000861">
    <property type="component" value="Segment"/>
</dbReference>
<dbReference type="GO" id="GO:0033644">
    <property type="term" value="C:host cell membrane"/>
    <property type="evidence" value="ECO:0007669"/>
    <property type="project" value="UniProtKB-SubCell"/>
</dbReference>
<dbReference type="GO" id="GO:0016020">
    <property type="term" value="C:membrane"/>
    <property type="evidence" value="ECO:0007669"/>
    <property type="project" value="UniProtKB-KW"/>
</dbReference>
<dbReference type="Gene3D" id="1.20.5.1000">
    <property type="entry name" value="arf6 gtpase in complex with a specific effector, jip4"/>
    <property type="match status" value="1"/>
</dbReference>
<comment type="subcellular location">
    <subcellularLocation>
        <location evidence="3">Host membrane</location>
        <topology evidence="3">Single-pass membrane protein</topology>
    </subcellularLocation>
</comment>
<comment type="induction">
    <text evidence="3">Expressed in the late phase of the viral replicative cycle.</text>
</comment>
<comment type="similarity">
    <text evidence="3">Belongs to the asfivirus B475L family.</text>
</comment>
<sequence length="480" mass="56849">MDQEESHVISIFETFGAYFINIFYNFLYKNALYKKHSIVMEYQYQVKGYILGVKQNKKLYEKMLDSFYKYFCNITQINSKTLSFSNFVSTIVDSFLPKEYSQSISLEKKDSILELLLCDYISNLGTFITTEKMLPFIVKNRKENYHRITKEMQDYSLTFLLKKRMELYNKFLRKQAYVEPKTELEETYTRLSSYNRSLLYQIEELTSEKKSLLAELSTLRKKYEKRQSEYRRLVQLLYQQIQRSSSSKNSYPLTKFIETLPSEHFSNEDYQKEAPRDQKQVETELLKQQEELLASQELTSKSPSNYPVPQSRTIVSKPSDNYPVPQSRSSKIDFDNSLQNQELNVKNGFSGKTILELNQDNPEIEEDILEFNQDNPEIEEDILEFNQDNPEIEEDILKFNQDNPEIEEDILKLNQDNPEIEEEVILEKENHKEDEPIVQNPFLENFWKPEQKTFNQSGLFEESSDFSNDWSGGDVTLNFS</sequence>